<sequence>MANIKSQKKRVLTNEKAHKRNVAVKSSLKTAVRATREAIAAGDKAAAEAAYKVAAQKLDKAAGAGVIHKNQAANRKSGLAVAINAL</sequence>
<reference key="1">
    <citation type="submission" date="2006-12" db="EMBL/GenBank/DDBJ databases">
        <title>Bifidobacterium adolescentis complete genome sequence.</title>
        <authorList>
            <person name="Suzuki T."/>
            <person name="Tsuda Y."/>
            <person name="Kanou N."/>
            <person name="Inoue T."/>
            <person name="Kumazaki K."/>
            <person name="Nagano S."/>
            <person name="Hirai S."/>
            <person name="Tanaka K."/>
            <person name="Watanabe K."/>
        </authorList>
    </citation>
    <scope>NUCLEOTIDE SEQUENCE [LARGE SCALE GENOMIC DNA]</scope>
    <source>
        <strain>ATCC 15703 / DSM 20083 / NCTC 11814 / E194a</strain>
    </source>
</reference>
<keyword id="KW-1185">Reference proteome</keyword>
<keyword id="KW-0687">Ribonucleoprotein</keyword>
<keyword id="KW-0689">Ribosomal protein</keyword>
<keyword id="KW-0694">RNA-binding</keyword>
<keyword id="KW-0699">rRNA-binding</keyword>
<evidence type="ECO:0000255" key="1">
    <source>
        <dbReference type="HAMAP-Rule" id="MF_00500"/>
    </source>
</evidence>
<evidence type="ECO:0000305" key="2"/>
<accession>A1A1E3</accession>
<dbReference type="EMBL" id="AP009256">
    <property type="protein sequence ID" value="BAF39526.1"/>
    <property type="molecule type" value="Genomic_DNA"/>
</dbReference>
<dbReference type="RefSeq" id="WP_003809394.1">
    <property type="nucleotide sequence ID" value="NZ_CAXVNC010000001.1"/>
</dbReference>
<dbReference type="SMR" id="A1A1E3"/>
<dbReference type="STRING" id="367928.BAD_0745"/>
<dbReference type="PaxDb" id="1680-BADO_0793"/>
<dbReference type="GeneID" id="4557610"/>
<dbReference type="KEGG" id="bad:BAD_0745"/>
<dbReference type="HOGENOM" id="CLU_160655_0_1_11"/>
<dbReference type="Proteomes" id="UP000008702">
    <property type="component" value="Chromosome"/>
</dbReference>
<dbReference type="GO" id="GO:0005829">
    <property type="term" value="C:cytosol"/>
    <property type="evidence" value="ECO:0007669"/>
    <property type="project" value="TreeGrafter"/>
</dbReference>
<dbReference type="GO" id="GO:0015935">
    <property type="term" value="C:small ribosomal subunit"/>
    <property type="evidence" value="ECO:0007669"/>
    <property type="project" value="TreeGrafter"/>
</dbReference>
<dbReference type="GO" id="GO:0070181">
    <property type="term" value="F:small ribosomal subunit rRNA binding"/>
    <property type="evidence" value="ECO:0007669"/>
    <property type="project" value="TreeGrafter"/>
</dbReference>
<dbReference type="GO" id="GO:0003735">
    <property type="term" value="F:structural constituent of ribosome"/>
    <property type="evidence" value="ECO:0007669"/>
    <property type="project" value="InterPro"/>
</dbReference>
<dbReference type="GO" id="GO:0006412">
    <property type="term" value="P:translation"/>
    <property type="evidence" value="ECO:0007669"/>
    <property type="project" value="UniProtKB-UniRule"/>
</dbReference>
<dbReference type="FunFam" id="1.20.58.110:FF:000001">
    <property type="entry name" value="30S ribosomal protein S20"/>
    <property type="match status" value="1"/>
</dbReference>
<dbReference type="Gene3D" id="1.20.58.110">
    <property type="entry name" value="Ribosomal protein S20"/>
    <property type="match status" value="1"/>
</dbReference>
<dbReference type="HAMAP" id="MF_00500">
    <property type="entry name" value="Ribosomal_bS20"/>
    <property type="match status" value="1"/>
</dbReference>
<dbReference type="InterPro" id="IPR002583">
    <property type="entry name" value="Ribosomal_bS20"/>
</dbReference>
<dbReference type="InterPro" id="IPR036510">
    <property type="entry name" value="Ribosomal_bS20_sf"/>
</dbReference>
<dbReference type="NCBIfam" id="TIGR00029">
    <property type="entry name" value="S20"/>
    <property type="match status" value="1"/>
</dbReference>
<dbReference type="PANTHER" id="PTHR33398">
    <property type="entry name" value="30S RIBOSOMAL PROTEIN S20"/>
    <property type="match status" value="1"/>
</dbReference>
<dbReference type="PANTHER" id="PTHR33398:SF1">
    <property type="entry name" value="SMALL RIBOSOMAL SUBUNIT PROTEIN BS20C"/>
    <property type="match status" value="1"/>
</dbReference>
<dbReference type="Pfam" id="PF01649">
    <property type="entry name" value="Ribosomal_S20p"/>
    <property type="match status" value="1"/>
</dbReference>
<dbReference type="SUPFAM" id="SSF46992">
    <property type="entry name" value="Ribosomal protein S20"/>
    <property type="match status" value="1"/>
</dbReference>
<gene>
    <name evidence="1" type="primary">rpsT</name>
    <name type="ordered locus">BAD_0745</name>
</gene>
<organism>
    <name type="scientific">Bifidobacterium adolescentis (strain ATCC 15703 / DSM 20083 / NCTC 11814 / E194a)</name>
    <dbReference type="NCBI Taxonomy" id="367928"/>
    <lineage>
        <taxon>Bacteria</taxon>
        <taxon>Bacillati</taxon>
        <taxon>Actinomycetota</taxon>
        <taxon>Actinomycetes</taxon>
        <taxon>Bifidobacteriales</taxon>
        <taxon>Bifidobacteriaceae</taxon>
        <taxon>Bifidobacterium</taxon>
    </lineage>
</organism>
<name>RS20_BIFAA</name>
<feature type="chain" id="PRO_1000014551" description="Small ribosomal subunit protein bS20">
    <location>
        <begin position="1"/>
        <end position="86"/>
    </location>
</feature>
<comment type="function">
    <text evidence="1">Binds directly to 16S ribosomal RNA.</text>
</comment>
<comment type="similarity">
    <text evidence="1">Belongs to the bacterial ribosomal protein bS20 family.</text>
</comment>
<proteinExistence type="inferred from homology"/>
<protein>
    <recommendedName>
        <fullName evidence="1">Small ribosomal subunit protein bS20</fullName>
    </recommendedName>
    <alternativeName>
        <fullName evidence="2">30S ribosomal protein S20</fullName>
    </alternativeName>
</protein>